<reference key="1">
    <citation type="journal article" date="2007" name="J. Bacteriol.">
        <title>Genome of the opportunistic pathogen Streptococcus sanguinis.</title>
        <authorList>
            <person name="Xu P."/>
            <person name="Alves J.M."/>
            <person name="Kitten T."/>
            <person name="Brown A."/>
            <person name="Chen Z."/>
            <person name="Ozaki L.S."/>
            <person name="Manque P."/>
            <person name="Ge X."/>
            <person name="Serrano M.G."/>
            <person name="Puiu D."/>
            <person name="Hendricks S."/>
            <person name="Wang Y."/>
            <person name="Chaplin M.D."/>
            <person name="Akan D."/>
            <person name="Paik S."/>
            <person name="Peterson D.L."/>
            <person name="Macrina F.L."/>
            <person name="Buck G.A."/>
        </authorList>
    </citation>
    <scope>NUCLEOTIDE SEQUENCE [LARGE SCALE GENOMIC DNA]</scope>
    <source>
        <strain>SK36</strain>
    </source>
</reference>
<protein>
    <recommendedName>
        <fullName evidence="1">Argininosuccinate lyase</fullName>
        <shortName evidence="1">ASAL</shortName>
        <ecNumber evidence="1">4.3.2.1</ecNumber>
    </recommendedName>
    <alternativeName>
        <fullName evidence="1">Arginosuccinase</fullName>
    </alternativeName>
</protein>
<sequence length="460" mass="51748">MVNHKLWGGRFEASLEDWVEEFGASIGFDYRLAPYDLQGSLAHVKMLGQTGIIAPEEAAAIQAGLEKLLVRYQAGELEFDVRNEDIHMNMEALLTEEIGPVAGKLHTARSRNDQVATDMHLYLKDQIGQIADKLLNLRQVLLNLAEEHVETIMPGYTHLQHAQPISFAHHLLAYYQMFSRDSQRFAFNLEHTNLSPLGAAALAGTTFSIDRELTADLLGFKGIYHNSLDAVSDRDFILEFLSNSSILIMHLSRLCEELINWCSYEYGFVSLSDTFSTGSSIMPQKKNPDMAELIRGKSGRVYGHLFSLLTVMKSLPLAYNKDLQEDKEGMFDTVDTIQKSLDIMAGMLSSMTVNKEKMLVSTQQDFSNATELADYLAKKGLPFREAHEIVGKLVLECSKAGYYLQDIPLSRYQEVSSLIEEDIYQALESQTAVQKRNSLGGTGFAQIRQELERAKRQLEK</sequence>
<organism>
    <name type="scientific">Streptococcus sanguinis (strain SK36)</name>
    <dbReference type="NCBI Taxonomy" id="388919"/>
    <lineage>
        <taxon>Bacteria</taxon>
        <taxon>Bacillati</taxon>
        <taxon>Bacillota</taxon>
        <taxon>Bacilli</taxon>
        <taxon>Lactobacillales</taxon>
        <taxon>Streptococcaceae</taxon>
        <taxon>Streptococcus</taxon>
    </lineage>
</organism>
<gene>
    <name evidence="1" type="primary">argH</name>
    <name type="ordered locus">SSA_2141</name>
</gene>
<dbReference type="EC" id="4.3.2.1" evidence="1"/>
<dbReference type="EMBL" id="CP000387">
    <property type="protein sequence ID" value="ABN45508.1"/>
    <property type="molecule type" value="Genomic_DNA"/>
</dbReference>
<dbReference type="RefSeq" id="WP_009660112.1">
    <property type="nucleotide sequence ID" value="NC_009009.1"/>
</dbReference>
<dbReference type="RefSeq" id="YP_001036058.1">
    <property type="nucleotide sequence ID" value="NC_009009.1"/>
</dbReference>
<dbReference type="SMR" id="A3CQQ3"/>
<dbReference type="STRING" id="388919.SSA_2141"/>
<dbReference type="KEGG" id="ssa:SSA_2141"/>
<dbReference type="PATRIC" id="fig|388919.9.peg.2027"/>
<dbReference type="eggNOG" id="COG0165">
    <property type="taxonomic scope" value="Bacteria"/>
</dbReference>
<dbReference type="HOGENOM" id="CLU_027272_2_3_9"/>
<dbReference type="OrthoDB" id="9769623at2"/>
<dbReference type="UniPathway" id="UPA00068">
    <property type="reaction ID" value="UER00114"/>
</dbReference>
<dbReference type="Proteomes" id="UP000002148">
    <property type="component" value="Chromosome"/>
</dbReference>
<dbReference type="GO" id="GO:0005829">
    <property type="term" value="C:cytosol"/>
    <property type="evidence" value="ECO:0007669"/>
    <property type="project" value="TreeGrafter"/>
</dbReference>
<dbReference type="GO" id="GO:0004056">
    <property type="term" value="F:argininosuccinate lyase activity"/>
    <property type="evidence" value="ECO:0007669"/>
    <property type="project" value="UniProtKB-UniRule"/>
</dbReference>
<dbReference type="GO" id="GO:0042450">
    <property type="term" value="P:arginine biosynthetic process via ornithine"/>
    <property type="evidence" value="ECO:0007669"/>
    <property type="project" value="InterPro"/>
</dbReference>
<dbReference type="GO" id="GO:0006526">
    <property type="term" value="P:L-arginine biosynthetic process"/>
    <property type="evidence" value="ECO:0007669"/>
    <property type="project" value="UniProtKB-UniRule"/>
</dbReference>
<dbReference type="CDD" id="cd01359">
    <property type="entry name" value="Argininosuccinate_lyase"/>
    <property type="match status" value="1"/>
</dbReference>
<dbReference type="FunFam" id="1.10.275.10:FF:000002">
    <property type="entry name" value="Argininosuccinate lyase"/>
    <property type="match status" value="1"/>
</dbReference>
<dbReference type="FunFam" id="1.10.40.30:FF:000001">
    <property type="entry name" value="Argininosuccinate lyase"/>
    <property type="match status" value="1"/>
</dbReference>
<dbReference type="FunFam" id="1.20.200.10:FF:000002">
    <property type="entry name" value="Argininosuccinate lyase"/>
    <property type="match status" value="1"/>
</dbReference>
<dbReference type="Gene3D" id="1.10.40.30">
    <property type="entry name" value="Fumarase/aspartase (C-terminal domain)"/>
    <property type="match status" value="1"/>
</dbReference>
<dbReference type="Gene3D" id="1.20.200.10">
    <property type="entry name" value="Fumarase/aspartase (Central domain)"/>
    <property type="match status" value="1"/>
</dbReference>
<dbReference type="Gene3D" id="1.10.275.10">
    <property type="entry name" value="Fumarase/aspartase (N-terminal domain)"/>
    <property type="match status" value="1"/>
</dbReference>
<dbReference type="HAMAP" id="MF_00006">
    <property type="entry name" value="Arg_succ_lyase"/>
    <property type="match status" value="1"/>
</dbReference>
<dbReference type="InterPro" id="IPR029419">
    <property type="entry name" value="Arg_succ_lyase_C"/>
</dbReference>
<dbReference type="InterPro" id="IPR009049">
    <property type="entry name" value="Argininosuccinate_lyase"/>
</dbReference>
<dbReference type="InterPro" id="IPR024083">
    <property type="entry name" value="Fumarase/histidase_N"/>
</dbReference>
<dbReference type="InterPro" id="IPR020557">
    <property type="entry name" value="Fumarate_lyase_CS"/>
</dbReference>
<dbReference type="InterPro" id="IPR000362">
    <property type="entry name" value="Fumarate_lyase_fam"/>
</dbReference>
<dbReference type="InterPro" id="IPR022761">
    <property type="entry name" value="Fumarate_lyase_N"/>
</dbReference>
<dbReference type="InterPro" id="IPR008948">
    <property type="entry name" value="L-Aspartase-like"/>
</dbReference>
<dbReference type="NCBIfam" id="TIGR00838">
    <property type="entry name" value="argH"/>
    <property type="match status" value="1"/>
</dbReference>
<dbReference type="PANTHER" id="PTHR43814">
    <property type="entry name" value="ARGININOSUCCINATE LYASE"/>
    <property type="match status" value="1"/>
</dbReference>
<dbReference type="PANTHER" id="PTHR43814:SF1">
    <property type="entry name" value="ARGININOSUCCINATE LYASE"/>
    <property type="match status" value="1"/>
</dbReference>
<dbReference type="Pfam" id="PF14698">
    <property type="entry name" value="ASL_C2"/>
    <property type="match status" value="1"/>
</dbReference>
<dbReference type="Pfam" id="PF00206">
    <property type="entry name" value="Lyase_1"/>
    <property type="match status" value="1"/>
</dbReference>
<dbReference type="PRINTS" id="PR00145">
    <property type="entry name" value="ARGSUCLYASE"/>
</dbReference>
<dbReference type="PRINTS" id="PR00149">
    <property type="entry name" value="FUMRATELYASE"/>
</dbReference>
<dbReference type="SUPFAM" id="SSF48557">
    <property type="entry name" value="L-aspartase-like"/>
    <property type="match status" value="1"/>
</dbReference>
<dbReference type="PROSITE" id="PS00163">
    <property type="entry name" value="FUMARATE_LYASES"/>
    <property type="match status" value="1"/>
</dbReference>
<comment type="catalytic activity">
    <reaction evidence="1">
        <text>2-(N(omega)-L-arginino)succinate = fumarate + L-arginine</text>
        <dbReference type="Rhea" id="RHEA:24020"/>
        <dbReference type="ChEBI" id="CHEBI:29806"/>
        <dbReference type="ChEBI" id="CHEBI:32682"/>
        <dbReference type="ChEBI" id="CHEBI:57472"/>
        <dbReference type="EC" id="4.3.2.1"/>
    </reaction>
</comment>
<comment type="pathway">
    <text evidence="1">Amino-acid biosynthesis; L-arginine biosynthesis; L-arginine from L-ornithine and carbamoyl phosphate: step 3/3.</text>
</comment>
<comment type="subcellular location">
    <subcellularLocation>
        <location evidence="1">Cytoplasm</location>
    </subcellularLocation>
</comment>
<comment type="similarity">
    <text evidence="1">Belongs to the lyase 1 family. Argininosuccinate lyase subfamily.</text>
</comment>
<accession>A3CQQ3</accession>
<feature type="chain" id="PRO_0000321456" description="Argininosuccinate lyase">
    <location>
        <begin position="1"/>
        <end position="460"/>
    </location>
</feature>
<evidence type="ECO:0000255" key="1">
    <source>
        <dbReference type="HAMAP-Rule" id="MF_00006"/>
    </source>
</evidence>
<name>ARLY_STRSV</name>
<proteinExistence type="inferred from homology"/>
<keyword id="KW-0028">Amino-acid biosynthesis</keyword>
<keyword id="KW-0055">Arginine biosynthesis</keyword>
<keyword id="KW-0963">Cytoplasm</keyword>
<keyword id="KW-0456">Lyase</keyword>
<keyword id="KW-1185">Reference proteome</keyword>